<reference key="1">
    <citation type="journal article" date="2005" name="PLoS Biol.">
        <title>The genome sequence of Rickettsia felis identifies the first putative conjugative plasmid in an obligate intracellular parasite.</title>
        <authorList>
            <person name="Ogata H."/>
            <person name="Renesto P."/>
            <person name="Audic S."/>
            <person name="Robert C."/>
            <person name="Blanc G."/>
            <person name="Fournier P.-E."/>
            <person name="Parinello H."/>
            <person name="Claverie J.-M."/>
            <person name="Raoult D."/>
        </authorList>
    </citation>
    <scope>NUCLEOTIDE SEQUENCE [LARGE SCALE GENOMIC DNA]</scope>
    <source>
        <strain>ATCC VR-1525 / URRWXCal2</strain>
    </source>
</reference>
<dbReference type="EMBL" id="CP000053">
    <property type="protein sequence ID" value="AAY60970.1"/>
    <property type="molecule type" value="Genomic_DNA"/>
</dbReference>
<dbReference type="SMR" id="Q4UN88"/>
<dbReference type="STRING" id="315456.RF_0119"/>
<dbReference type="KEGG" id="rfe:RF_0119"/>
<dbReference type="eggNOG" id="COG0445">
    <property type="taxonomic scope" value="Bacteria"/>
</dbReference>
<dbReference type="HOGENOM" id="CLU_007831_2_2_5"/>
<dbReference type="OrthoDB" id="9815560at2"/>
<dbReference type="Proteomes" id="UP000008548">
    <property type="component" value="Chromosome"/>
</dbReference>
<dbReference type="GO" id="GO:0005829">
    <property type="term" value="C:cytosol"/>
    <property type="evidence" value="ECO:0007669"/>
    <property type="project" value="TreeGrafter"/>
</dbReference>
<dbReference type="GO" id="GO:0050660">
    <property type="term" value="F:flavin adenine dinucleotide binding"/>
    <property type="evidence" value="ECO:0007669"/>
    <property type="project" value="UniProtKB-UniRule"/>
</dbReference>
<dbReference type="GO" id="GO:0030488">
    <property type="term" value="P:tRNA methylation"/>
    <property type="evidence" value="ECO:0007669"/>
    <property type="project" value="TreeGrafter"/>
</dbReference>
<dbReference type="GO" id="GO:0002098">
    <property type="term" value="P:tRNA wobble uridine modification"/>
    <property type="evidence" value="ECO:0007669"/>
    <property type="project" value="InterPro"/>
</dbReference>
<dbReference type="FunFam" id="3.50.50.60:FF:000082">
    <property type="entry name" value="protein MTO1 homolog, mitochondrial isoform X1"/>
    <property type="match status" value="1"/>
</dbReference>
<dbReference type="FunFam" id="1.10.150.570:FF:000001">
    <property type="entry name" value="tRNA uridine 5-carboxymethylaminomethyl modification enzyme MnmG"/>
    <property type="match status" value="1"/>
</dbReference>
<dbReference type="FunFam" id="3.50.50.60:FF:000002">
    <property type="entry name" value="tRNA uridine 5-carboxymethylaminomethyl modification enzyme MnmG"/>
    <property type="match status" value="1"/>
</dbReference>
<dbReference type="Gene3D" id="3.50.50.60">
    <property type="entry name" value="FAD/NAD(P)-binding domain"/>
    <property type="match status" value="2"/>
</dbReference>
<dbReference type="Gene3D" id="1.10.150.570">
    <property type="entry name" value="GidA associated domain, C-terminal subdomain"/>
    <property type="match status" value="1"/>
</dbReference>
<dbReference type="HAMAP" id="MF_00129">
    <property type="entry name" value="MnmG_GidA"/>
    <property type="match status" value="1"/>
</dbReference>
<dbReference type="InterPro" id="IPR036188">
    <property type="entry name" value="FAD/NAD-bd_sf"/>
</dbReference>
<dbReference type="InterPro" id="IPR049312">
    <property type="entry name" value="GIDA_C_N"/>
</dbReference>
<dbReference type="InterPro" id="IPR004416">
    <property type="entry name" value="MnmG"/>
</dbReference>
<dbReference type="InterPro" id="IPR002218">
    <property type="entry name" value="MnmG-rel"/>
</dbReference>
<dbReference type="InterPro" id="IPR020595">
    <property type="entry name" value="MnmG-rel_CS"/>
</dbReference>
<dbReference type="InterPro" id="IPR026904">
    <property type="entry name" value="MnmG_C"/>
</dbReference>
<dbReference type="InterPro" id="IPR047001">
    <property type="entry name" value="MnmG_C_subdom"/>
</dbReference>
<dbReference type="InterPro" id="IPR044920">
    <property type="entry name" value="MnmG_C_subdom_sf"/>
</dbReference>
<dbReference type="InterPro" id="IPR040131">
    <property type="entry name" value="MnmG_N"/>
</dbReference>
<dbReference type="NCBIfam" id="TIGR00136">
    <property type="entry name" value="mnmG_gidA"/>
    <property type="match status" value="1"/>
</dbReference>
<dbReference type="PANTHER" id="PTHR11806">
    <property type="entry name" value="GLUCOSE INHIBITED DIVISION PROTEIN A"/>
    <property type="match status" value="1"/>
</dbReference>
<dbReference type="PANTHER" id="PTHR11806:SF0">
    <property type="entry name" value="PROTEIN MTO1 HOMOLOG, MITOCHONDRIAL"/>
    <property type="match status" value="1"/>
</dbReference>
<dbReference type="Pfam" id="PF01134">
    <property type="entry name" value="GIDA"/>
    <property type="match status" value="1"/>
</dbReference>
<dbReference type="Pfam" id="PF21680">
    <property type="entry name" value="GIDA_C_1st"/>
    <property type="match status" value="1"/>
</dbReference>
<dbReference type="Pfam" id="PF13932">
    <property type="entry name" value="SAM_GIDA_C"/>
    <property type="match status" value="1"/>
</dbReference>
<dbReference type="PRINTS" id="PR00411">
    <property type="entry name" value="PNDRDTASEI"/>
</dbReference>
<dbReference type="SMART" id="SM01228">
    <property type="entry name" value="GIDA_assoc_3"/>
    <property type="match status" value="1"/>
</dbReference>
<dbReference type="SUPFAM" id="SSF51905">
    <property type="entry name" value="FAD/NAD(P)-binding domain"/>
    <property type="match status" value="1"/>
</dbReference>
<dbReference type="PROSITE" id="PS01280">
    <property type="entry name" value="GIDA_1"/>
    <property type="match status" value="1"/>
</dbReference>
<dbReference type="PROSITE" id="PS01281">
    <property type="entry name" value="GIDA_2"/>
    <property type="match status" value="1"/>
</dbReference>
<protein>
    <recommendedName>
        <fullName evidence="1">tRNA uridine 5-carboxymethylaminomethyl modification enzyme MnmG</fullName>
    </recommendedName>
    <alternativeName>
        <fullName evidence="1">Glucose-inhibited division protein A</fullName>
    </alternativeName>
</protein>
<comment type="function">
    <text evidence="1">NAD-binding protein involved in the addition of a carboxymethylaminomethyl (cmnm) group at the wobble position (U34) of certain tRNAs, forming tRNA-cmnm(5)s(2)U34.</text>
</comment>
<comment type="cofactor">
    <cofactor evidence="1">
        <name>FAD</name>
        <dbReference type="ChEBI" id="CHEBI:57692"/>
    </cofactor>
</comment>
<comment type="subunit">
    <text evidence="1">Homodimer. Heterotetramer of two MnmE and two MnmG subunits.</text>
</comment>
<comment type="subcellular location">
    <subcellularLocation>
        <location evidence="1">Cytoplasm</location>
    </subcellularLocation>
</comment>
<comment type="similarity">
    <text evidence="1">Belongs to the MnmG family.</text>
</comment>
<evidence type="ECO:0000255" key="1">
    <source>
        <dbReference type="HAMAP-Rule" id="MF_00129"/>
    </source>
</evidence>
<gene>
    <name evidence="1" type="primary">mnmG</name>
    <name evidence="1" type="synonym">gidA</name>
    <name type="ordered locus">RF_0119</name>
</gene>
<proteinExistence type="inferred from homology"/>
<feature type="chain" id="PRO_0000117165" description="tRNA uridine 5-carboxymethylaminomethyl modification enzyme MnmG">
    <location>
        <begin position="1"/>
        <end position="622"/>
    </location>
</feature>
<feature type="binding site" evidence="1">
    <location>
        <begin position="10"/>
        <end position="15"/>
    </location>
    <ligand>
        <name>FAD</name>
        <dbReference type="ChEBI" id="CHEBI:57692"/>
    </ligand>
</feature>
<feature type="binding site" evidence="1">
    <location>
        <position position="122"/>
    </location>
    <ligand>
        <name>FAD</name>
        <dbReference type="ChEBI" id="CHEBI:57692"/>
    </ligand>
</feature>
<feature type="binding site" evidence="1">
    <location>
        <position position="177"/>
    </location>
    <ligand>
        <name>FAD</name>
        <dbReference type="ChEBI" id="CHEBI:57692"/>
    </ligand>
</feature>
<feature type="binding site" evidence="1">
    <location>
        <begin position="269"/>
        <end position="283"/>
    </location>
    <ligand>
        <name>NAD(+)</name>
        <dbReference type="ChEBI" id="CHEBI:57540"/>
    </ligand>
</feature>
<feature type="binding site" evidence="1">
    <location>
        <position position="366"/>
    </location>
    <ligand>
        <name>FAD</name>
        <dbReference type="ChEBI" id="CHEBI:57692"/>
    </ligand>
</feature>
<accession>Q4UN88</accession>
<sequence>MLKYDVIVIGGGHAGVEAAAASARLGASTLLITLKPENLGEMSCNPAIGGIAKGTLVKEIDALDGLMGYVIDQGGIHYKMLNETRGPAVWGPRAQADRKLYKKAMCQILTNYPNLDILYGKVEDIEIKSSKVEAVILNNDSKILCQKIILTTGTFLSGLIHIGQKKIPAGRVDEEPSYGLSNTLKKVGFKIARLKTGTPPRIDGRTIDYSKTALQPGDKTPRPFSELTSVVNVPQINCFITKTTSETHDIIRENLNKSAMYSGQIEGIGPRYCPSIEDKIVRFSTKSEHRIFLEPEGLDDYTIYPNGISTSLPEDVQHKLIKTIPGLENVKVLRPGYAIEYDYVDPREISVTLETKKIAGLYFAGQINGTTGYEEAAGQGIIAGINAALAVKDQAPFMLTRANSYIGVMIDDLTTFGTIEPYRMFTSRSEYRLSLRADNADLRLTELGINIGVVSEKRKKIFTKKCEDIEKTKLLLNTLSLTTSKLAKMGIQVAQDGTYKTVLDLFKIPSFNVEQAIKIFPMLKEMQNNNILQLLYIEAKYASYLTRQHADINLFQSEEAQLIPKNIDYFKIPSISLEIQEKLSSHKPTTIGVARRISGITPAAITAIIIYLKTKYSDGSST</sequence>
<organism>
    <name type="scientific">Rickettsia felis (strain ATCC VR-1525 / URRWXCal2)</name>
    <name type="common">Rickettsia azadi</name>
    <dbReference type="NCBI Taxonomy" id="315456"/>
    <lineage>
        <taxon>Bacteria</taxon>
        <taxon>Pseudomonadati</taxon>
        <taxon>Pseudomonadota</taxon>
        <taxon>Alphaproteobacteria</taxon>
        <taxon>Rickettsiales</taxon>
        <taxon>Rickettsiaceae</taxon>
        <taxon>Rickettsieae</taxon>
        <taxon>Rickettsia</taxon>
        <taxon>spotted fever group</taxon>
    </lineage>
</organism>
<keyword id="KW-0963">Cytoplasm</keyword>
<keyword id="KW-0274">FAD</keyword>
<keyword id="KW-0285">Flavoprotein</keyword>
<keyword id="KW-0520">NAD</keyword>
<keyword id="KW-0819">tRNA processing</keyword>
<name>MNMG_RICFE</name>